<evidence type="ECO:0000250" key="1"/>
<evidence type="ECO:0000255" key="2">
    <source>
        <dbReference type="PROSITE-ProRule" id="PRU00391"/>
    </source>
</evidence>
<evidence type="ECO:0000305" key="3"/>
<reference key="1">
    <citation type="journal article" date="2002" name="J. Bacteriol.">
        <title>Whole-genome comparison of Mycobacterium tuberculosis clinical and laboratory strains.</title>
        <authorList>
            <person name="Fleischmann R.D."/>
            <person name="Alland D."/>
            <person name="Eisen J.A."/>
            <person name="Carpenter L."/>
            <person name="White O."/>
            <person name="Peterson J.D."/>
            <person name="DeBoy R.T."/>
            <person name="Dodson R.J."/>
            <person name="Gwinn M.L."/>
            <person name="Haft D.H."/>
            <person name="Hickey E.K."/>
            <person name="Kolonay J.F."/>
            <person name="Nelson W.C."/>
            <person name="Umayam L.A."/>
            <person name="Ermolaeva M.D."/>
            <person name="Salzberg S.L."/>
            <person name="Delcher A."/>
            <person name="Utterback T.R."/>
            <person name="Weidman J.F."/>
            <person name="Khouri H.M."/>
            <person name="Gill J."/>
            <person name="Mikula A."/>
            <person name="Bishai W."/>
            <person name="Jacobs W.R. Jr."/>
            <person name="Venter J.C."/>
            <person name="Fraser C.M."/>
        </authorList>
    </citation>
    <scope>NUCLEOTIDE SEQUENCE [LARGE SCALE GENOMIC DNA]</scope>
    <source>
        <strain>CDC 1551 / Oshkosh</strain>
    </source>
</reference>
<sequence>MPEGHTLHRLARLHQRRFAGAPVSVSSPQGRFADSASALNGRVLRRASAWGKHLFHHYVGGPVVHVHLGLYGTFTEWARPTDGWLPEPAGQVRMRMVGAEFGTDLRGPTVCESIDDGEVADVVARLGPDPLRSDANPSSAWSRITKSRRPIGALLMDQTVIAGVGNVYRNELLFRHRIDPQRPGRGIGEPEFDAAWNDLVSLMKVGLRRGKIIVVRPEHDHGLPSYLPDRPRTYVYRRAGEPCRVCGGVIRTALLEGRNVFWCPVCQT</sequence>
<protein>
    <recommendedName>
        <fullName>Endonuclease 8 1</fullName>
    </recommendedName>
    <alternativeName>
        <fullName>DNA glycosylase/AP lyase Nei 1</fullName>
        <ecNumber>3.2.2.-</ecNumber>
    </alternativeName>
    <alternativeName>
        <fullName>DNA-(apurinic or apyrimidinic site) lyase Nei 1</fullName>
        <ecNumber>4.2.99.18</ecNumber>
    </alternativeName>
    <alternativeName>
        <fullName>Endonuclease VIII 1</fullName>
    </alternativeName>
</protein>
<accession>P9WNB8</accession>
<accession>L0TCL5</accession>
<accession>O53191</accession>
<accession>P64158</accession>
<keyword id="KW-0227">DNA damage</keyword>
<keyword id="KW-0234">DNA repair</keyword>
<keyword id="KW-0238">DNA-binding</keyword>
<keyword id="KW-0326">Glycosidase</keyword>
<keyword id="KW-0378">Hydrolase</keyword>
<keyword id="KW-0456">Lyase</keyword>
<keyword id="KW-0479">Metal-binding</keyword>
<keyword id="KW-0511">Multifunctional enzyme</keyword>
<keyword id="KW-1185">Reference proteome</keyword>
<keyword id="KW-0862">Zinc</keyword>
<keyword id="KW-0863">Zinc-finger</keyword>
<proteinExistence type="inferred from homology"/>
<dbReference type="EC" id="3.2.2.-"/>
<dbReference type="EC" id="4.2.99.18"/>
<dbReference type="EMBL" id="AE000516">
    <property type="protein sequence ID" value="AAK46839.1"/>
    <property type="molecule type" value="Genomic_DNA"/>
</dbReference>
<dbReference type="PIR" id="G70865">
    <property type="entry name" value="G70865"/>
</dbReference>
<dbReference type="RefSeq" id="WP_003412657.1">
    <property type="nucleotide sequence ID" value="NZ_KK341227.1"/>
</dbReference>
<dbReference type="SMR" id="P9WNB8"/>
<dbReference type="KEGG" id="mtc:MT2539"/>
<dbReference type="PATRIC" id="fig|83331.31.peg.2740"/>
<dbReference type="HOGENOM" id="CLU_038423_2_1_11"/>
<dbReference type="Proteomes" id="UP000001020">
    <property type="component" value="Chromosome"/>
</dbReference>
<dbReference type="GO" id="GO:0140078">
    <property type="term" value="F:class I DNA-(apurinic or apyrimidinic site) endonuclease activity"/>
    <property type="evidence" value="ECO:0007669"/>
    <property type="project" value="UniProtKB-EC"/>
</dbReference>
<dbReference type="GO" id="GO:0003684">
    <property type="term" value="F:damaged DNA binding"/>
    <property type="evidence" value="ECO:0007669"/>
    <property type="project" value="InterPro"/>
</dbReference>
<dbReference type="GO" id="GO:0000703">
    <property type="term" value="F:oxidized pyrimidine nucleobase lesion DNA N-glycosylase activity"/>
    <property type="evidence" value="ECO:0007669"/>
    <property type="project" value="TreeGrafter"/>
</dbReference>
<dbReference type="GO" id="GO:0008270">
    <property type="term" value="F:zinc ion binding"/>
    <property type="evidence" value="ECO:0007669"/>
    <property type="project" value="UniProtKB-KW"/>
</dbReference>
<dbReference type="GO" id="GO:0006284">
    <property type="term" value="P:base-excision repair"/>
    <property type="evidence" value="ECO:0007669"/>
    <property type="project" value="InterPro"/>
</dbReference>
<dbReference type="CDD" id="cd08970">
    <property type="entry name" value="AcNei1_N"/>
    <property type="match status" value="1"/>
</dbReference>
<dbReference type="FunFam" id="3.20.190.10:FF:000007">
    <property type="entry name" value="DNA glycosylase"/>
    <property type="match status" value="1"/>
</dbReference>
<dbReference type="FunFam" id="1.10.8.50:FF:000003">
    <property type="entry name" value="Formamidopyrimidine-DNA glycosylase"/>
    <property type="match status" value="1"/>
</dbReference>
<dbReference type="Gene3D" id="1.10.8.50">
    <property type="match status" value="1"/>
</dbReference>
<dbReference type="Gene3D" id="3.20.190.10">
    <property type="entry name" value="MutM-like, N-terminal"/>
    <property type="match status" value="1"/>
</dbReference>
<dbReference type="InterPro" id="IPR015886">
    <property type="entry name" value="DNA_glyclase/AP_lyase_DNA-bd"/>
</dbReference>
<dbReference type="InterPro" id="IPR015887">
    <property type="entry name" value="DNA_glyclase_Znf_dom_DNA_BS"/>
</dbReference>
<dbReference type="InterPro" id="IPR012319">
    <property type="entry name" value="FPG_cat"/>
</dbReference>
<dbReference type="InterPro" id="IPR035937">
    <property type="entry name" value="MutM-like_N-ter"/>
</dbReference>
<dbReference type="InterPro" id="IPR010979">
    <property type="entry name" value="Ribosomal_uS13-like_H2TH"/>
</dbReference>
<dbReference type="InterPro" id="IPR000214">
    <property type="entry name" value="Znf_DNA_glyclase/AP_lyase"/>
</dbReference>
<dbReference type="InterPro" id="IPR010663">
    <property type="entry name" value="Znf_FPG/IleRS"/>
</dbReference>
<dbReference type="PANTHER" id="PTHR42697">
    <property type="entry name" value="ENDONUCLEASE 8"/>
    <property type="match status" value="1"/>
</dbReference>
<dbReference type="PANTHER" id="PTHR42697:SF3">
    <property type="entry name" value="ENDONUCLEASE 8 1"/>
    <property type="match status" value="1"/>
</dbReference>
<dbReference type="Pfam" id="PF01149">
    <property type="entry name" value="Fapy_DNA_glyco"/>
    <property type="match status" value="1"/>
</dbReference>
<dbReference type="Pfam" id="PF06831">
    <property type="entry name" value="H2TH"/>
    <property type="match status" value="1"/>
</dbReference>
<dbReference type="Pfam" id="PF06827">
    <property type="entry name" value="zf-FPG_IleRS"/>
    <property type="match status" value="1"/>
</dbReference>
<dbReference type="SMART" id="SM00898">
    <property type="entry name" value="Fapy_DNA_glyco"/>
    <property type="match status" value="1"/>
</dbReference>
<dbReference type="SMART" id="SM01232">
    <property type="entry name" value="H2TH"/>
    <property type="match status" value="1"/>
</dbReference>
<dbReference type="SUPFAM" id="SSF57716">
    <property type="entry name" value="Glucocorticoid receptor-like (DNA-binding domain)"/>
    <property type="match status" value="1"/>
</dbReference>
<dbReference type="SUPFAM" id="SSF81624">
    <property type="entry name" value="N-terminal domain of MutM-like DNA repair proteins"/>
    <property type="match status" value="1"/>
</dbReference>
<dbReference type="SUPFAM" id="SSF46946">
    <property type="entry name" value="S13-like H2TH domain"/>
    <property type="match status" value="1"/>
</dbReference>
<dbReference type="PROSITE" id="PS01242">
    <property type="entry name" value="ZF_FPG_1"/>
    <property type="match status" value="1"/>
</dbReference>
<dbReference type="PROSITE" id="PS51066">
    <property type="entry name" value="ZF_FPG_2"/>
    <property type="match status" value="1"/>
</dbReference>
<organism>
    <name type="scientific">Mycobacterium tuberculosis (strain CDC 1551 / Oshkosh)</name>
    <dbReference type="NCBI Taxonomy" id="83331"/>
    <lineage>
        <taxon>Bacteria</taxon>
        <taxon>Bacillati</taxon>
        <taxon>Actinomycetota</taxon>
        <taxon>Actinomycetes</taxon>
        <taxon>Mycobacteriales</taxon>
        <taxon>Mycobacteriaceae</taxon>
        <taxon>Mycobacterium</taxon>
        <taxon>Mycobacterium tuberculosis complex</taxon>
    </lineage>
</organism>
<name>END8A_MYCTO</name>
<feature type="initiator methionine" description="Removed" evidence="1">
    <location>
        <position position="1"/>
    </location>
</feature>
<feature type="chain" id="PRO_0000427154" description="Endonuclease 8 1">
    <location>
        <begin position="2"/>
        <end position="268"/>
    </location>
</feature>
<feature type="zinc finger region" description="FPG-type" evidence="2">
    <location>
        <begin position="234"/>
        <end position="268"/>
    </location>
</feature>
<feature type="active site" description="Schiff-base intermediate with DNA" evidence="1">
    <location>
        <position position="2"/>
    </location>
</feature>
<feature type="active site" description="Proton donor" evidence="1">
    <location>
        <position position="3"/>
    </location>
</feature>
<feature type="active site" description="Proton donor; for beta-elimination activity" evidence="1">
    <location>
        <position position="52"/>
    </location>
</feature>
<feature type="active site" description="Proton donor; for delta-elimination activity" evidence="1">
    <location>
        <position position="258"/>
    </location>
</feature>
<feature type="binding site" evidence="1">
    <location>
        <position position="125"/>
    </location>
    <ligand>
        <name>DNA</name>
        <dbReference type="ChEBI" id="CHEBI:16991"/>
    </ligand>
</feature>
<feature type="binding site" evidence="1">
    <location>
        <position position="166"/>
    </location>
    <ligand>
        <name>DNA</name>
        <dbReference type="ChEBI" id="CHEBI:16991"/>
    </ligand>
</feature>
<comment type="function">
    <text evidence="1">Involved in base excision repair of DNA damaged by oxidation or by mutagenic agents. DNA glycosylase that recognizes and removes damaged pyrimidines (By similarity).</text>
</comment>
<comment type="catalytic activity">
    <reaction>
        <text>2'-deoxyribonucleotide-(2'-deoxyribose 5'-phosphate)-2'-deoxyribonucleotide-DNA = a 3'-end 2'-deoxyribonucleotide-(2,3-dehydro-2,3-deoxyribose 5'-phosphate)-DNA + a 5'-end 5'-phospho-2'-deoxyribonucleoside-DNA + H(+)</text>
        <dbReference type="Rhea" id="RHEA:66592"/>
        <dbReference type="Rhea" id="RHEA-COMP:13180"/>
        <dbReference type="Rhea" id="RHEA-COMP:16897"/>
        <dbReference type="Rhea" id="RHEA-COMP:17067"/>
        <dbReference type="ChEBI" id="CHEBI:15378"/>
        <dbReference type="ChEBI" id="CHEBI:136412"/>
        <dbReference type="ChEBI" id="CHEBI:157695"/>
        <dbReference type="ChEBI" id="CHEBI:167181"/>
        <dbReference type="EC" id="4.2.99.18"/>
    </reaction>
</comment>
<comment type="cofactor">
    <cofactor evidence="2">
        <name>Zn(2+)</name>
        <dbReference type="ChEBI" id="CHEBI:29105"/>
    </cofactor>
    <text evidence="2">Binds 1 zinc ion per subunit.</text>
</comment>
<comment type="similarity">
    <text evidence="3">Belongs to the FPG family.</text>
</comment>
<gene>
    <name type="primary">nei1</name>
    <name type="synonym">nei2</name>
    <name type="ordered locus">MT2539</name>
</gene>